<sequence length="483" mass="52960">MHFRAITRIVGLLVILFSGTMIIPGLVALIYRDGAGRAFTQTFFVALAIGSMLWWPNRKEKGELKSREGFLIVVLFWTVLGSVGALPFIFSESPNLTITDAFFESFSGLTTTGATTLVGLDSLPHAILFYRQMLQWFGGMGIIVLAVAILPILGVGGMQLYRAEMPGPLKDNKMRPRIAETAKTLWLIYVLLTVACALALWFAGMDAFDAIGHSFATIAIGGFSTHDASIGYFDSPTINTIIAIFLLISGCNYGLHFSLLSGRSLKVYWRDPEFRMFIGVQFTLVVICTLVLWFHNVYSSALMTINQAFFQVVSMATTAGFTTDSIARWPLFLPVLLLCSAFIGGCAGSTGGGLKVIRILLLFKQGNRELKRLVHPNAVYSIKLGNRALPERILEAVWGFFSAYALVFIVSMLAIIATGVDDFSAFASVVATLNNLGPGLGVVADNFTSMNPVAKWILIANMLFGRLEVFTLLVLFTPTFWRE</sequence>
<comment type="function">
    <text evidence="1 3 5">Low-affinity potassium transport system. Interacts with Trk system potassium uptake protein TrkA. Requires TrkE (sapD) for transport activity, 20% more uptake is seen with both SapD and SapF (PubMed:11700350). Transport in the absence of SapD and SapF is dependent on a high membrane potential and a high cytoplasmic ATP concentration, suggesting this protein may be able to interact with other ATP-binding proteins (PubMed:11700350). Can transport potassium and rubidium (PubMed:7896723).</text>
</comment>
<comment type="biophysicochemical properties">
    <kinetics>
        <KM evidence="5">6 mM for K(+)</KM>
        <KM evidence="5">2 mM for Rb(+)</KM>
        <Vmax evidence="5">800.0 umol/min/g enzyme with K(+) as substrate</Vmax>
        <Vmax evidence="5">10.0 umol/min/g enzyme with Rb(+) as substrate</Vmax>
    </kinetics>
</comment>
<comment type="subcellular location">
    <subcellularLocation>
        <location evidence="4">Cell inner membrane</location>
        <topology evidence="4">Multi-pass membrane protein</topology>
    </subcellularLocation>
</comment>
<comment type="similarity">
    <text evidence="6">Belongs to the TrkH potassium transport family.</text>
</comment>
<comment type="sequence caution" evidence="6">
    <conflict type="frameshift">
        <sequence resource="EMBL-CDS" id="AAA67646"/>
    </conflict>
</comment>
<comment type="sequence caution" evidence="6">
    <conflict type="frameshift">
        <sequence resource="EMBL" id="X54687"/>
    </conflict>
</comment>
<proteinExistence type="evidence at protein level"/>
<evidence type="ECO:0000250" key="1"/>
<evidence type="ECO:0000250" key="2">
    <source>
        <dbReference type="UniProtKB" id="Q87TN7"/>
    </source>
</evidence>
<evidence type="ECO:0000269" key="3">
    <source>
    </source>
</evidence>
<evidence type="ECO:0000269" key="4">
    <source>
    </source>
</evidence>
<evidence type="ECO:0000269" key="5">
    <source>
    </source>
</evidence>
<evidence type="ECO:0000305" key="6"/>
<keyword id="KW-0997">Cell inner membrane</keyword>
<keyword id="KW-1003">Cell membrane</keyword>
<keyword id="KW-0407">Ion channel</keyword>
<keyword id="KW-0406">Ion transport</keyword>
<keyword id="KW-0472">Membrane</keyword>
<keyword id="KW-0479">Metal-binding</keyword>
<keyword id="KW-0630">Potassium</keyword>
<keyword id="KW-0633">Potassium transport</keyword>
<keyword id="KW-1185">Reference proteome</keyword>
<keyword id="KW-0812">Transmembrane</keyword>
<keyword id="KW-1133">Transmembrane helix</keyword>
<keyword id="KW-0813">Transport</keyword>
<gene>
    <name type="primary">trkH</name>
    <name type="ordered locus">b3849</name>
    <name type="ordered locus">JW5576</name>
</gene>
<name>TRKH_ECOLI</name>
<protein>
    <recommendedName>
        <fullName>Trk system potassium uptake protein TrkH</fullName>
    </recommendedName>
</protein>
<dbReference type="EMBL" id="X54687">
    <property type="status" value="NOT_ANNOTATED_CDS"/>
    <property type="molecule type" value="Genomic_DNA"/>
</dbReference>
<dbReference type="EMBL" id="M87049">
    <property type="protein sequence ID" value="AAA67646.1"/>
    <property type="status" value="ALT_FRAME"/>
    <property type="molecule type" value="Genomic_DNA"/>
</dbReference>
<dbReference type="EMBL" id="U00096">
    <property type="protein sequence ID" value="AAT48231.1"/>
    <property type="molecule type" value="Genomic_DNA"/>
</dbReference>
<dbReference type="EMBL" id="AP009048">
    <property type="protein sequence ID" value="BAE77454.1"/>
    <property type="molecule type" value="Genomic_DNA"/>
</dbReference>
<dbReference type="PIR" id="B65190">
    <property type="entry name" value="B65190"/>
</dbReference>
<dbReference type="RefSeq" id="WP_000545677.1">
    <property type="nucleotide sequence ID" value="NZ_STEB01000021.1"/>
</dbReference>
<dbReference type="RefSeq" id="YP_026273.1">
    <property type="nucleotide sequence ID" value="NC_000913.3"/>
</dbReference>
<dbReference type="SMR" id="P0AFZ7"/>
<dbReference type="BioGRID" id="4262619">
    <property type="interactions" value="7"/>
</dbReference>
<dbReference type="BioGRID" id="852630">
    <property type="interactions" value="1"/>
</dbReference>
<dbReference type="DIP" id="DIP-47978N"/>
<dbReference type="FunCoup" id="P0AFZ7">
    <property type="interactions" value="247"/>
</dbReference>
<dbReference type="IntAct" id="P0AFZ7">
    <property type="interactions" value="2"/>
</dbReference>
<dbReference type="STRING" id="511145.b3849"/>
<dbReference type="TCDB" id="2.A.38.1.1">
    <property type="family name" value="the k(+) transporter (trk) family"/>
</dbReference>
<dbReference type="PaxDb" id="511145-b3849"/>
<dbReference type="EnsemblBacteria" id="AAT48231">
    <property type="protein sequence ID" value="AAT48231"/>
    <property type="gene ID" value="b3849"/>
</dbReference>
<dbReference type="GeneID" id="93778088"/>
<dbReference type="GeneID" id="948333"/>
<dbReference type="KEGG" id="ecj:JW5576"/>
<dbReference type="KEGG" id="eco:b3849"/>
<dbReference type="KEGG" id="ecoc:C3026_20810"/>
<dbReference type="PATRIC" id="fig|1411691.4.peg.2861"/>
<dbReference type="EchoBASE" id="EB1014"/>
<dbReference type="eggNOG" id="COG0168">
    <property type="taxonomic scope" value="Bacteria"/>
</dbReference>
<dbReference type="HOGENOM" id="CLU_030708_0_2_6"/>
<dbReference type="InParanoid" id="P0AFZ7"/>
<dbReference type="OMA" id="LQWMGGM"/>
<dbReference type="OrthoDB" id="9810952at2"/>
<dbReference type="PhylomeDB" id="P0AFZ7"/>
<dbReference type="BioCyc" id="EcoCyc:TRKH-MONOMER"/>
<dbReference type="BioCyc" id="MetaCyc:TRKH-MONOMER"/>
<dbReference type="PRO" id="PR:P0AFZ7"/>
<dbReference type="Proteomes" id="UP000000625">
    <property type="component" value="Chromosome"/>
</dbReference>
<dbReference type="GO" id="GO:0005886">
    <property type="term" value="C:plasma membrane"/>
    <property type="evidence" value="ECO:0000314"/>
    <property type="project" value="UniProtKB"/>
</dbReference>
<dbReference type="GO" id="GO:0005267">
    <property type="term" value="F:potassium channel activity"/>
    <property type="evidence" value="ECO:0000250"/>
    <property type="project" value="UniProtKB"/>
</dbReference>
<dbReference type="GO" id="GO:0030955">
    <property type="term" value="F:potassium ion binding"/>
    <property type="evidence" value="ECO:0000250"/>
    <property type="project" value="UniProtKB"/>
</dbReference>
<dbReference type="GO" id="GO:0015079">
    <property type="term" value="F:potassium ion transmembrane transporter activity"/>
    <property type="evidence" value="ECO:0000315"/>
    <property type="project" value="EcoCyc"/>
</dbReference>
<dbReference type="GO" id="GO:0015379">
    <property type="term" value="F:potassium:chloride symporter activity"/>
    <property type="evidence" value="ECO:0007669"/>
    <property type="project" value="InterPro"/>
</dbReference>
<dbReference type="GO" id="GO:0071805">
    <property type="term" value="P:potassium ion transmembrane transport"/>
    <property type="evidence" value="ECO:0000315"/>
    <property type="project" value="EcoCyc"/>
</dbReference>
<dbReference type="InterPro" id="IPR003445">
    <property type="entry name" value="Cat_transpt"/>
</dbReference>
<dbReference type="InterPro" id="IPR004772">
    <property type="entry name" value="TrkH"/>
</dbReference>
<dbReference type="NCBIfam" id="TIGR00933">
    <property type="entry name" value="2a38"/>
    <property type="match status" value="1"/>
</dbReference>
<dbReference type="NCBIfam" id="NF008020">
    <property type="entry name" value="PRK10750.1"/>
    <property type="match status" value="1"/>
</dbReference>
<dbReference type="PANTHER" id="PTHR32024">
    <property type="entry name" value="TRK SYSTEM POTASSIUM UPTAKE PROTEIN TRKG-RELATED"/>
    <property type="match status" value="1"/>
</dbReference>
<dbReference type="PANTHER" id="PTHR32024:SF2">
    <property type="entry name" value="TRK SYSTEM POTASSIUM UPTAKE PROTEIN TRKG-RELATED"/>
    <property type="match status" value="1"/>
</dbReference>
<dbReference type="Pfam" id="PF02386">
    <property type="entry name" value="TrkH"/>
    <property type="match status" value="1"/>
</dbReference>
<dbReference type="PIRSF" id="PIRSF006247">
    <property type="entry name" value="TrkH"/>
    <property type="match status" value="1"/>
</dbReference>
<reference key="1">
    <citation type="journal article" date="1990" name="Nucleic Acids Res.">
        <title>Nucleotide sequence between the fadB gene and the rrnA operon from Escherichia coli.</title>
        <authorList>
            <person name="Nakahigashi K."/>
            <person name="Inokuchi H."/>
        </authorList>
    </citation>
    <scope>NUCLEOTIDE SEQUENCE [GENOMIC DNA]</scope>
    <source>
        <strain>K12</strain>
    </source>
</reference>
<reference key="2">
    <citation type="journal article" date="1995" name="J. Bacteriol.">
        <title>TrkH and its homolog, TrkG, determine the specificity and kinetics of cation transport by the Trk system of Escherichia coli.</title>
        <authorList>
            <person name="Schlosser A."/>
            <person name="Meldorf M."/>
            <person name="Stumpe S."/>
            <person name="Bakker E.P."/>
            <person name="Epstein W."/>
        </authorList>
    </citation>
    <scope>NUCLEOTIDE SEQUENCE [GENOMIC DNA]</scope>
    <scope>FUNCTION</scope>
    <scope>BIOPHYSICOCHEMICAL PROPERTIES</scope>
</reference>
<reference key="3">
    <citation type="journal article" date="1992" name="Science">
        <title>Analysis of the Escherichia coli genome: DNA sequence of the region from 84.5 to 86.5 minutes.</title>
        <authorList>
            <person name="Daniels D.L."/>
            <person name="Plunkett G. III"/>
            <person name="Burland V.D."/>
            <person name="Blattner F.R."/>
        </authorList>
    </citation>
    <scope>NUCLEOTIDE SEQUENCE [LARGE SCALE GENOMIC DNA]</scope>
    <source>
        <strain>K12 / MG1655 / ATCC 47076</strain>
    </source>
</reference>
<reference key="4">
    <citation type="journal article" date="1997" name="Science">
        <title>The complete genome sequence of Escherichia coli K-12.</title>
        <authorList>
            <person name="Blattner F.R."/>
            <person name="Plunkett G. III"/>
            <person name="Bloch C.A."/>
            <person name="Perna N.T."/>
            <person name="Burland V."/>
            <person name="Riley M."/>
            <person name="Collado-Vides J."/>
            <person name="Glasner J.D."/>
            <person name="Rode C.K."/>
            <person name="Mayhew G.F."/>
            <person name="Gregor J."/>
            <person name="Davis N.W."/>
            <person name="Kirkpatrick H.A."/>
            <person name="Goeden M.A."/>
            <person name="Rose D.J."/>
            <person name="Mau B."/>
            <person name="Shao Y."/>
        </authorList>
    </citation>
    <scope>NUCLEOTIDE SEQUENCE [LARGE SCALE GENOMIC DNA]</scope>
    <scope>SEQUENCE REVISION TO 69</scope>
    <source>
        <strain>K12 / MG1655 / ATCC 47076</strain>
    </source>
</reference>
<reference key="5">
    <citation type="journal article" date="2006" name="Nucleic Acids Res.">
        <title>Escherichia coli K-12: a cooperatively developed annotation snapshot -- 2005.</title>
        <authorList>
            <person name="Riley M."/>
            <person name="Abe T."/>
            <person name="Arnaud M.B."/>
            <person name="Berlyn M.K.B."/>
            <person name="Blattner F.R."/>
            <person name="Chaudhuri R.R."/>
            <person name="Glasner J.D."/>
            <person name="Horiuchi T."/>
            <person name="Keseler I.M."/>
            <person name="Kosuge T."/>
            <person name="Mori H."/>
            <person name="Perna N.T."/>
            <person name="Plunkett G. III"/>
            <person name="Rudd K.E."/>
            <person name="Serres M.H."/>
            <person name="Thomas G.H."/>
            <person name="Thomson N.R."/>
            <person name="Wishart D."/>
            <person name="Wanner B.L."/>
        </authorList>
    </citation>
    <scope>SEQUENCE REVISION</scope>
</reference>
<reference key="6">
    <citation type="journal article" date="2006" name="Mol. Syst. Biol.">
        <title>Highly accurate genome sequences of Escherichia coli K-12 strains MG1655 and W3110.</title>
        <authorList>
            <person name="Hayashi K."/>
            <person name="Morooka N."/>
            <person name="Yamamoto Y."/>
            <person name="Fujita K."/>
            <person name="Isono K."/>
            <person name="Choi S."/>
            <person name="Ohtsubo E."/>
            <person name="Baba T."/>
            <person name="Wanner B.L."/>
            <person name="Mori H."/>
            <person name="Horiuchi T."/>
        </authorList>
    </citation>
    <scope>NUCLEOTIDE SEQUENCE [LARGE SCALE GENOMIC DNA]</scope>
    <source>
        <strain>K12 / W3110 / ATCC 27325 / DSM 5911</strain>
    </source>
</reference>
<reference key="7">
    <citation type="journal article" date="2001" name="Microbiology">
        <title>Identification of the ABC protein SapD as the subunit that confers ATP dependence to the K+-uptake systems Trk(H) and Trk(G) from Escherichia coli K-12.</title>
        <authorList>
            <person name="Harms C."/>
            <person name="Domoto Y."/>
            <person name="Celik C."/>
            <person name="Rahe E."/>
            <person name="Stumpe S."/>
            <person name="Schmid R."/>
            <person name="Nakamura T."/>
            <person name="Bakker E.P."/>
        </authorList>
    </citation>
    <scope>FUNCTION</scope>
    <source>
        <strain>TK1001</strain>
    </source>
</reference>
<reference key="8">
    <citation type="journal article" date="2005" name="Science">
        <title>Global topology analysis of the Escherichia coli inner membrane proteome.</title>
        <authorList>
            <person name="Daley D.O."/>
            <person name="Rapp M."/>
            <person name="Granseth E."/>
            <person name="Melen K."/>
            <person name="Drew D."/>
            <person name="von Heijne G."/>
        </authorList>
    </citation>
    <scope>SUBCELLULAR LOCATION</scope>
    <source>
        <strain>K12 / MG1655 / ATCC 47076</strain>
    </source>
</reference>
<accession>P0AFZ7</accession>
<accession>P21166</accession>
<accession>P76769</accession>
<accession>Q2M8F2</accession>
<organism>
    <name type="scientific">Escherichia coli (strain K12)</name>
    <dbReference type="NCBI Taxonomy" id="83333"/>
    <lineage>
        <taxon>Bacteria</taxon>
        <taxon>Pseudomonadati</taxon>
        <taxon>Pseudomonadota</taxon>
        <taxon>Gammaproteobacteria</taxon>
        <taxon>Enterobacterales</taxon>
        <taxon>Enterobacteriaceae</taxon>
        <taxon>Escherichia</taxon>
    </lineage>
</organism>
<feature type="chain" id="PRO_0000070475" description="Trk system potassium uptake protein TrkH">
    <location>
        <begin position="1"/>
        <end position="483"/>
    </location>
</feature>
<feature type="topological domain" description="Cytoplasmic" evidence="1">
    <location>
        <begin position="1"/>
        <end position="2"/>
    </location>
</feature>
<feature type="transmembrane region" description="Helical" evidence="1">
    <location>
        <begin position="3"/>
        <end position="29"/>
    </location>
</feature>
<feature type="topological domain" description="Periplasmic" evidence="1">
    <location>
        <begin position="30"/>
        <end position="35"/>
    </location>
</feature>
<feature type="transmembrane region" description="Helical" evidence="1">
    <location>
        <begin position="36"/>
        <end position="57"/>
    </location>
</feature>
<feature type="topological domain" description="Cytoplasmic" evidence="1">
    <location>
        <begin position="58"/>
        <end position="65"/>
    </location>
</feature>
<feature type="transmembrane region" description="Helical" evidence="1">
    <location>
        <begin position="66"/>
        <end position="90"/>
    </location>
</feature>
<feature type="topological domain" description="Periplasmic" evidence="1">
    <location>
        <begin position="91"/>
        <end status="unknown"/>
    </location>
</feature>
<feature type="intramembrane region" evidence="1">
    <location>
        <begin status="unknown"/>
        <end position="97"/>
    </location>
</feature>
<feature type="intramembrane region" description="Helical; Pore-forming" evidence="1">
    <location>
        <begin position="98"/>
        <end position="109"/>
    </location>
</feature>
<feature type="intramembrane region" evidence="1">
    <location>
        <begin position="110"/>
        <end position="115"/>
    </location>
</feature>
<feature type="topological domain" description="Periplasmic" evidence="1">
    <location>
        <begin position="116"/>
        <end position="124"/>
    </location>
</feature>
<feature type="transmembrane region" description="Helical" evidence="1">
    <location>
        <begin position="125"/>
        <end position="150"/>
    </location>
</feature>
<feature type="topological domain" description="Cytoplasmic" evidence="1">
    <location>
        <begin position="151"/>
        <end position="177"/>
    </location>
</feature>
<feature type="transmembrane region" description="Helical" evidence="1">
    <location>
        <begin position="178"/>
        <end position="202"/>
    </location>
</feature>
<feature type="topological domain" description="Periplasmic" evidence="1">
    <location>
        <begin position="203"/>
        <end position="205"/>
    </location>
</feature>
<feature type="intramembrane region" evidence="1">
    <location>
        <position position="206"/>
    </location>
</feature>
<feature type="intramembrane region" description="Helical; Pore-forming" evidence="1">
    <location>
        <begin position="207"/>
        <end position="218"/>
    </location>
</feature>
<feature type="intramembrane region" evidence="1">
    <location>
        <begin position="219"/>
        <end position="224"/>
    </location>
</feature>
<feature type="topological domain" description="Periplasmic" evidence="1">
    <location>
        <begin position="225"/>
        <end position="234"/>
    </location>
</feature>
<feature type="intramembrane region" description="Helical" evidence="1">
    <location>
        <begin position="235"/>
        <end position="250"/>
    </location>
</feature>
<feature type="intramembrane region" evidence="1">
    <location>
        <begin position="251"/>
        <end status="unknown"/>
    </location>
</feature>
<feature type="topological domain" description="Cytoplasmic" evidence="1">
    <location>
        <begin status="unknown"/>
        <end position="273"/>
    </location>
</feature>
<feature type="transmembrane region" description="Helical" evidence="1">
    <location>
        <begin position="274"/>
        <end position="294"/>
    </location>
</feature>
<feature type="topological domain" description="Periplasmic" evidence="1">
    <location>
        <begin position="295"/>
        <end status="unknown"/>
    </location>
</feature>
<feature type="intramembrane region" evidence="1">
    <location>
        <begin status="unknown"/>
        <end position="300"/>
    </location>
</feature>
<feature type="intramembrane region" description="Helical; Pore-forming" evidence="1">
    <location>
        <begin position="301"/>
        <end position="316"/>
    </location>
</feature>
<feature type="intramembrane region" evidence="1">
    <location>
        <begin position="317"/>
        <end position="322"/>
    </location>
</feature>
<feature type="topological domain" description="Periplasmic" evidence="1">
    <location>
        <begin position="323"/>
        <end position="330"/>
    </location>
</feature>
<feature type="intramembrane region" description="Helical" evidence="1">
    <location>
        <begin position="331"/>
        <end position="342"/>
    </location>
</feature>
<feature type="intramembrane region" description="Note=Loop between two helices" evidence="1">
    <location>
        <begin position="343"/>
        <end position="355"/>
    </location>
</feature>
<feature type="intramembrane region" description="Helical" evidence="1">
    <location>
        <begin position="356"/>
        <end status="unknown"/>
    </location>
</feature>
<feature type="topological domain" description="Cytoplasmic" evidence="1">
    <location>
        <begin status="unknown"/>
        <end position="389"/>
    </location>
</feature>
<feature type="transmembrane region" description="Helical" evidence="1">
    <location>
        <begin position="390"/>
        <end position="417"/>
    </location>
</feature>
<feature type="topological domain" description="Periplasmic" evidence="1">
    <location>
        <begin position="418"/>
        <end position="419"/>
    </location>
</feature>
<feature type="intramembrane region" evidence="1">
    <location>
        <begin position="420"/>
        <end position="421"/>
    </location>
</feature>
<feature type="intramembrane region" description="Helical; Pore-forming" evidence="1">
    <location>
        <begin position="422"/>
        <end position="432"/>
    </location>
</feature>
<feature type="intramembrane region" evidence="1">
    <location>
        <begin position="433"/>
        <end position="439"/>
    </location>
</feature>
<feature type="topological domain" description="Periplasmic" evidence="1">
    <location>
        <begin position="440"/>
        <end position="451"/>
    </location>
</feature>
<feature type="intramembrane region" description="Helical" evidence="1">
    <location>
        <begin position="452"/>
        <end position="463"/>
    </location>
</feature>
<feature type="intramembrane region" evidence="1">
    <location>
        <begin position="464"/>
        <end status="unknown"/>
    </location>
</feature>
<feature type="topological domain" description="Cytoplasmic" evidence="1">
    <location>
        <begin status="unknown"/>
        <end position="483"/>
    </location>
</feature>
<feature type="region of interest" description="Selectivity filter part 1" evidence="1">
    <location>
        <begin position="110"/>
        <end position="115"/>
    </location>
</feature>
<feature type="region of interest" description="Selectivity filter part 2" evidence="1">
    <location>
        <begin position="219"/>
        <end position="224"/>
    </location>
</feature>
<feature type="region of interest" description="Selectivity filter part 3" evidence="1">
    <location>
        <begin position="317"/>
        <end position="322"/>
    </location>
</feature>
<feature type="region of interest" description="Selectivity filter part 4" evidence="1">
    <location>
        <begin position="434"/>
        <end position="439"/>
    </location>
</feature>
<feature type="binding site" evidence="2">
    <location>
        <position position="111"/>
    </location>
    <ligand>
        <name>K(+)</name>
        <dbReference type="ChEBI" id="CHEBI:29103"/>
    </ligand>
</feature>
<feature type="binding site" evidence="2">
    <location>
        <position position="112"/>
    </location>
    <ligand>
        <name>K(+)</name>
        <dbReference type="ChEBI" id="CHEBI:29103"/>
    </ligand>
</feature>
<feature type="binding site" evidence="2">
    <location>
        <position position="220"/>
    </location>
    <ligand>
        <name>K(+)</name>
        <dbReference type="ChEBI" id="CHEBI:29103"/>
    </ligand>
</feature>
<feature type="binding site" evidence="2">
    <location>
        <position position="221"/>
    </location>
    <ligand>
        <name>K(+)</name>
        <dbReference type="ChEBI" id="CHEBI:29103"/>
    </ligand>
</feature>
<feature type="binding site" evidence="2">
    <location>
        <position position="318"/>
    </location>
    <ligand>
        <name>K(+)</name>
        <dbReference type="ChEBI" id="CHEBI:29103"/>
    </ligand>
</feature>
<feature type="binding site" evidence="2">
    <location>
        <position position="319"/>
    </location>
    <ligand>
        <name>K(+)</name>
        <dbReference type="ChEBI" id="CHEBI:29103"/>
    </ligand>
</feature>
<feature type="binding site" evidence="2">
    <location>
        <position position="435"/>
    </location>
    <ligand>
        <name>K(+)</name>
        <dbReference type="ChEBI" id="CHEBI:29103"/>
    </ligand>
</feature>
<feature type="binding site" evidence="2">
    <location>
        <position position="436"/>
    </location>
    <ligand>
        <name>K(+)</name>
        <dbReference type="ChEBI" id="CHEBI:29103"/>
    </ligand>
</feature>
<feature type="sequence conflict" description="In Ref. 3; AAA67646." evidence="6" ref="3">
    <location>
        <position position="69"/>
    </location>
</feature>
<feature type="sequence conflict" description="In Ref. 1; X54687." evidence="6" ref="1">
    <original>V</original>
    <variation>IV</variation>
    <location>
        <position position="144"/>
    </location>
</feature>
<feature type="sequence conflict" description="In Ref. 1; X54687." evidence="6" ref="1">
    <original>C</original>
    <variation>S</variation>
    <location>
        <position position="196"/>
    </location>
</feature>